<keyword id="KW-0067">ATP-binding</keyword>
<keyword id="KW-0436">Ligase</keyword>
<keyword id="KW-0460">Magnesium</keyword>
<keyword id="KW-0464">Manganese</keyword>
<keyword id="KW-0479">Metal-binding</keyword>
<keyword id="KW-0547">Nucleotide-binding</keyword>
<keyword id="KW-0648">Protein biosynthesis</keyword>
<keyword id="KW-1185">Reference proteome</keyword>
<organism>
    <name type="scientific">Vibrio cholerae serotype O1 (strain ATCC 39315 / El Tor Inaba N16961)</name>
    <dbReference type="NCBI Taxonomy" id="243277"/>
    <lineage>
        <taxon>Bacteria</taxon>
        <taxon>Pseudomonadati</taxon>
        <taxon>Pseudomonadota</taxon>
        <taxon>Gammaproteobacteria</taxon>
        <taxon>Vibrionales</taxon>
        <taxon>Vibrionaceae</taxon>
        <taxon>Vibrio</taxon>
    </lineage>
</organism>
<proteinExistence type="inferred from homology"/>
<name>RIMK_VIBCH</name>
<protein>
    <recommendedName>
        <fullName evidence="1">Probable alpha-L-glutamate ligase</fullName>
        <ecNumber evidence="1">6.3.2.-</ecNumber>
    </recommendedName>
</protein>
<dbReference type="EC" id="6.3.2.-" evidence="1"/>
<dbReference type="EMBL" id="AE003852">
    <property type="protein sequence ID" value="AAF95425.1"/>
    <property type="molecule type" value="Genomic_DNA"/>
</dbReference>
<dbReference type="PIR" id="E82096">
    <property type="entry name" value="E82096"/>
</dbReference>
<dbReference type="RefSeq" id="NP_231912.1">
    <property type="nucleotide sequence ID" value="NC_002505.1"/>
</dbReference>
<dbReference type="RefSeq" id="WP_000689982.1">
    <property type="nucleotide sequence ID" value="NZ_LT906614.1"/>
</dbReference>
<dbReference type="SMR" id="Q9KPT1"/>
<dbReference type="STRING" id="243277.VC_2281"/>
<dbReference type="DNASU" id="2613203"/>
<dbReference type="EnsemblBacteria" id="AAF95425">
    <property type="protein sequence ID" value="AAF95425"/>
    <property type="gene ID" value="VC_2281"/>
</dbReference>
<dbReference type="GeneID" id="89513725"/>
<dbReference type="KEGG" id="vch:VC_2281"/>
<dbReference type="PATRIC" id="fig|243277.26.peg.2176"/>
<dbReference type="eggNOG" id="COG0189">
    <property type="taxonomic scope" value="Bacteria"/>
</dbReference>
<dbReference type="HOGENOM" id="CLU_054353_0_1_6"/>
<dbReference type="Proteomes" id="UP000000584">
    <property type="component" value="Chromosome 1"/>
</dbReference>
<dbReference type="GO" id="GO:0005737">
    <property type="term" value="C:cytoplasm"/>
    <property type="evidence" value="ECO:0000318"/>
    <property type="project" value="GO_Central"/>
</dbReference>
<dbReference type="GO" id="GO:0005524">
    <property type="term" value="F:ATP binding"/>
    <property type="evidence" value="ECO:0007669"/>
    <property type="project" value="UniProtKB-UniRule"/>
</dbReference>
<dbReference type="GO" id="GO:0046872">
    <property type="term" value="F:metal ion binding"/>
    <property type="evidence" value="ECO:0007669"/>
    <property type="project" value="UniProtKB-KW"/>
</dbReference>
<dbReference type="GO" id="GO:0018169">
    <property type="term" value="F:ribosomal S6-glutamic acid ligase activity"/>
    <property type="evidence" value="ECO:0000318"/>
    <property type="project" value="GO_Central"/>
</dbReference>
<dbReference type="GO" id="GO:0036211">
    <property type="term" value="P:protein modification process"/>
    <property type="evidence" value="ECO:0007669"/>
    <property type="project" value="InterPro"/>
</dbReference>
<dbReference type="GO" id="GO:0009432">
    <property type="term" value="P:SOS response"/>
    <property type="evidence" value="ECO:0000318"/>
    <property type="project" value="GO_Central"/>
</dbReference>
<dbReference type="GO" id="GO:0006412">
    <property type="term" value="P:translation"/>
    <property type="evidence" value="ECO:0007669"/>
    <property type="project" value="UniProtKB-KW"/>
</dbReference>
<dbReference type="FunFam" id="3.40.50.20:FF:000004">
    <property type="entry name" value="Probable alpha-L-glutamate ligase"/>
    <property type="match status" value="1"/>
</dbReference>
<dbReference type="FunFam" id="3.30.1490.20:FF:000005">
    <property type="entry name" value="Probable alpha-L-glutamate ligase 1"/>
    <property type="match status" value="1"/>
</dbReference>
<dbReference type="FunFam" id="3.30.470.20:FF:000016">
    <property type="entry name" value="Ribosomal protein S6--L-glutamate ligase"/>
    <property type="match status" value="1"/>
</dbReference>
<dbReference type="Gene3D" id="3.40.50.20">
    <property type="match status" value="1"/>
</dbReference>
<dbReference type="Gene3D" id="3.30.1490.20">
    <property type="entry name" value="ATP-grasp fold, A domain"/>
    <property type="match status" value="1"/>
</dbReference>
<dbReference type="Gene3D" id="3.30.470.20">
    <property type="entry name" value="ATP-grasp fold, B domain"/>
    <property type="match status" value="1"/>
</dbReference>
<dbReference type="HAMAP" id="MF_01552">
    <property type="entry name" value="RimK"/>
    <property type="match status" value="1"/>
</dbReference>
<dbReference type="InterPro" id="IPR011761">
    <property type="entry name" value="ATP-grasp"/>
</dbReference>
<dbReference type="InterPro" id="IPR013651">
    <property type="entry name" value="ATP-grasp_RimK-type"/>
</dbReference>
<dbReference type="InterPro" id="IPR013815">
    <property type="entry name" value="ATP_grasp_subdomain_1"/>
</dbReference>
<dbReference type="InterPro" id="IPR023533">
    <property type="entry name" value="RimK"/>
</dbReference>
<dbReference type="InterPro" id="IPR041107">
    <property type="entry name" value="Rimk_N"/>
</dbReference>
<dbReference type="InterPro" id="IPR004666">
    <property type="entry name" value="Rp_bS6_RimK/Lys_biosynth_LsyX"/>
</dbReference>
<dbReference type="NCBIfam" id="NF007764">
    <property type="entry name" value="PRK10446.1"/>
    <property type="match status" value="1"/>
</dbReference>
<dbReference type="NCBIfam" id="TIGR00768">
    <property type="entry name" value="rimK_fam"/>
    <property type="match status" value="1"/>
</dbReference>
<dbReference type="PANTHER" id="PTHR21621:SF7">
    <property type="entry name" value="RIBOSOMAL PROTEIN BS6--L-GLUTAMATE LIGASE"/>
    <property type="match status" value="1"/>
</dbReference>
<dbReference type="PANTHER" id="PTHR21621">
    <property type="entry name" value="RIBOSOMAL PROTEIN S6 MODIFICATION PROTEIN"/>
    <property type="match status" value="1"/>
</dbReference>
<dbReference type="Pfam" id="PF08443">
    <property type="entry name" value="RimK"/>
    <property type="match status" value="1"/>
</dbReference>
<dbReference type="Pfam" id="PF18030">
    <property type="entry name" value="Rimk_N"/>
    <property type="match status" value="1"/>
</dbReference>
<dbReference type="SUPFAM" id="SSF56059">
    <property type="entry name" value="Glutathione synthetase ATP-binding domain-like"/>
    <property type="match status" value="1"/>
</dbReference>
<dbReference type="PROSITE" id="PS50975">
    <property type="entry name" value="ATP_GRASP"/>
    <property type="match status" value="1"/>
</dbReference>
<evidence type="ECO:0000255" key="1">
    <source>
        <dbReference type="HAMAP-Rule" id="MF_01552"/>
    </source>
</evidence>
<comment type="cofactor">
    <cofactor evidence="1">
        <name>Mg(2+)</name>
        <dbReference type="ChEBI" id="CHEBI:18420"/>
    </cofactor>
    <cofactor evidence="1">
        <name>Mn(2+)</name>
        <dbReference type="ChEBI" id="CHEBI:29035"/>
    </cofactor>
    <text evidence="1">Binds 2 magnesium or manganese ions per subunit.</text>
</comment>
<comment type="similarity">
    <text evidence="1">Belongs to the RimK family.</text>
</comment>
<sequence>MKIGILSRNASLYSTKRLIEACKQRGHEVRVIDALRCYMNINSDKPEIHYKGEELAGFDAVIPRIGASVTFYGTAVLRQFEMMGVYPANESVAITRSRDKLRSMQLLSRRGIGMPITGFASKPDDVKDLLDMVGGAPVVIKLLEGTQGIGVVLAETRTAAESVIEAFMGLKANIMVQEYIKEAGGADIRCFVIGDKVIAAMKRQGADGEFRSNLHRGGTASLVKITPQERKTAIEAAKIMGLNVAGVDLLRSARGPLVMEVNSSPGLEGIEAATGKDIAGMIVEFIEKNAASKRTKTRGKG</sequence>
<gene>
    <name evidence="1" type="primary">rimK</name>
    <name type="ordered locus">VC_2281</name>
</gene>
<accession>Q9KPT1</accession>
<feature type="chain" id="PRO_0000205487" description="Probable alpha-L-glutamate ligase">
    <location>
        <begin position="1"/>
        <end position="301"/>
    </location>
</feature>
<feature type="domain" description="ATP-grasp" evidence="1">
    <location>
        <begin position="104"/>
        <end position="287"/>
    </location>
</feature>
<feature type="binding site" evidence="1">
    <location>
        <position position="141"/>
    </location>
    <ligand>
        <name>ATP</name>
        <dbReference type="ChEBI" id="CHEBI:30616"/>
    </ligand>
</feature>
<feature type="binding site" evidence="1">
    <location>
        <begin position="178"/>
        <end position="179"/>
    </location>
    <ligand>
        <name>ATP</name>
        <dbReference type="ChEBI" id="CHEBI:30616"/>
    </ligand>
</feature>
<feature type="binding site" evidence="1">
    <location>
        <position position="187"/>
    </location>
    <ligand>
        <name>ATP</name>
        <dbReference type="ChEBI" id="CHEBI:30616"/>
    </ligand>
</feature>
<feature type="binding site" evidence="1">
    <location>
        <begin position="211"/>
        <end position="213"/>
    </location>
    <ligand>
        <name>ATP</name>
        <dbReference type="ChEBI" id="CHEBI:30616"/>
    </ligand>
</feature>
<feature type="binding site" evidence="1">
    <location>
        <position position="248"/>
    </location>
    <ligand>
        <name>Mg(2+)</name>
        <dbReference type="ChEBI" id="CHEBI:18420"/>
        <label>1</label>
    </ligand>
</feature>
<feature type="binding site" evidence="1">
    <location>
        <position position="248"/>
    </location>
    <ligand>
        <name>Mn(2+)</name>
        <dbReference type="ChEBI" id="CHEBI:29035"/>
        <label>1</label>
    </ligand>
</feature>
<feature type="binding site" evidence="1">
    <location>
        <position position="260"/>
    </location>
    <ligand>
        <name>Mg(2+)</name>
        <dbReference type="ChEBI" id="CHEBI:18420"/>
        <label>1</label>
    </ligand>
</feature>
<feature type="binding site" evidence="1">
    <location>
        <position position="260"/>
    </location>
    <ligand>
        <name>Mg(2+)</name>
        <dbReference type="ChEBI" id="CHEBI:18420"/>
        <label>2</label>
    </ligand>
</feature>
<feature type="binding site" evidence="1">
    <location>
        <position position="260"/>
    </location>
    <ligand>
        <name>Mn(2+)</name>
        <dbReference type="ChEBI" id="CHEBI:29035"/>
        <label>1</label>
    </ligand>
</feature>
<feature type="binding site" evidence="1">
    <location>
        <position position="260"/>
    </location>
    <ligand>
        <name>Mn(2+)</name>
        <dbReference type="ChEBI" id="CHEBI:29035"/>
        <label>2</label>
    </ligand>
</feature>
<feature type="binding site" evidence="1">
    <location>
        <position position="262"/>
    </location>
    <ligand>
        <name>Mg(2+)</name>
        <dbReference type="ChEBI" id="CHEBI:18420"/>
        <label>2</label>
    </ligand>
</feature>
<feature type="binding site" evidence="1">
    <location>
        <position position="262"/>
    </location>
    <ligand>
        <name>Mn(2+)</name>
        <dbReference type="ChEBI" id="CHEBI:29035"/>
        <label>2</label>
    </ligand>
</feature>
<reference key="1">
    <citation type="journal article" date="2000" name="Nature">
        <title>DNA sequence of both chromosomes of the cholera pathogen Vibrio cholerae.</title>
        <authorList>
            <person name="Heidelberg J.F."/>
            <person name="Eisen J.A."/>
            <person name="Nelson W.C."/>
            <person name="Clayton R.A."/>
            <person name="Gwinn M.L."/>
            <person name="Dodson R.J."/>
            <person name="Haft D.H."/>
            <person name="Hickey E.K."/>
            <person name="Peterson J.D."/>
            <person name="Umayam L.A."/>
            <person name="Gill S.R."/>
            <person name="Nelson K.E."/>
            <person name="Read T.D."/>
            <person name="Tettelin H."/>
            <person name="Richardson D.L."/>
            <person name="Ermolaeva M.D."/>
            <person name="Vamathevan J.J."/>
            <person name="Bass S."/>
            <person name="Qin H."/>
            <person name="Dragoi I."/>
            <person name="Sellers P."/>
            <person name="McDonald L.A."/>
            <person name="Utterback T.R."/>
            <person name="Fleischmann R.D."/>
            <person name="Nierman W.C."/>
            <person name="White O."/>
            <person name="Salzberg S.L."/>
            <person name="Smith H.O."/>
            <person name="Colwell R.R."/>
            <person name="Mekalanos J.J."/>
            <person name="Venter J.C."/>
            <person name="Fraser C.M."/>
        </authorList>
    </citation>
    <scope>NUCLEOTIDE SEQUENCE [LARGE SCALE GENOMIC DNA]</scope>
    <source>
        <strain>ATCC 39315 / El Tor Inaba N16961</strain>
    </source>
</reference>